<evidence type="ECO:0000255" key="1">
    <source>
        <dbReference type="HAMAP-Rule" id="MF_00323"/>
    </source>
</evidence>
<gene>
    <name evidence="1" type="primary">hemH</name>
    <name type="ordered locus">PA14_61580</name>
</gene>
<feature type="chain" id="PRO_1000019345" description="Ferrochelatase">
    <location>
        <begin position="1"/>
        <end position="340"/>
    </location>
</feature>
<feature type="binding site" evidence="1">
    <location>
        <position position="189"/>
    </location>
    <ligand>
        <name>Fe cation</name>
        <dbReference type="ChEBI" id="CHEBI:24875"/>
    </ligand>
</feature>
<feature type="binding site" evidence="1">
    <location>
        <position position="292"/>
    </location>
    <ligand>
        <name>Fe cation</name>
        <dbReference type="ChEBI" id="CHEBI:24875"/>
    </ligand>
</feature>
<organism>
    <name type="scientific">Pseudomonas aeruginosa (strain UCBPP-PA14)</name>
    <dbReference type="NCBI Taxonomy" id="208963"/>
    <lineage>
        <taxon>Bacteria</taxon>
        <taxon>Pseudomonadati</taxon>
        <taxon>Pseudomonadota</taxon>
        <taxon>Gammaproteobacteria</taxon>
        <taxon>Pseudomonadales</taxon>
        <taxon>Pseudomonadaceae</taxon>
        <taxon>Pseudomonas</taxon>
    </lineage>
</organism>
<name>HEMH_PSEAB</name>
<accession>Q02G19</accession>
<keyword id="KW-0963">Cytoplasm</keyword>
<keyword id="KW-0350">Heme biosynthesis</keyword>
<keyword id="KW-0408">Iron</keyword>
<keyword id="KW-0456">Lyase</keyword>
<keyword id="KW-0479">Metal-binding</keyword>
<keyword id="KW-0627">Porphyrin biosynthesis</keyword>
<sequence>MTENALLLLNLGSPDSTRVEDVRRYLDQFLMDPYVVDLPWPLRRLLVSLILIKRPAESAHAYSSIWWDEGSPLIVLSRRLQEAMKPHWPHGPVELAMRYGQPAIEKVLLDLARRGIRRVTLAPLYPQFADSTTTTAEQEVRRVIAAHRLELEVSTLPPFYDQPVYLDALVESVRPYLQQPHDHLLLSFHGLPERHIRKLVKDPAHDLLAENSRNVSPEALALCYRSQCLRTAEAFAERAGLEQGRWSVSFQSRLGRAKWIEPYTDAKLDELVQRGVKRLLVMCPAFVADCIETLEEIGMRGREQFISAGGEDLVLIPCLNDHPAWVGALGEMSGRLARPL</sequence>
<dbReference type="EC" id="4.98.1.1" evidence="1"/>
<dbReference type="EMBL" id="CP000438">
    <property type="protein sequence ID" value="ABJ14036.1"/>
    <property type="molecule type" value="Genomic_DNA"/>
</dbReference>
<dbReference type="RefSeq" id="WP_003141619.1">
    <property type="nucleotide sequence ID" value="NZ_CP034244.1"/>
</dbReference>
<dbReference type="SMR" id="Q02G19"/>
<dbReference type="KEGG" id="pau:PA14_61580"/>
<dbReference type="PseudoCAP" id="PA14_61580"/>
<dbReference type="HOGENOM" id="CLU_018884_0_1_6"/>
<dbReference type="BioCyc" id="PAER208963:G1G74-5206-MONOMER"/>
<dbReference type="UniPathway" id="UPA00252">
    <property type="reaction ID" value="UER00325"/>
</dbReference>
<dbReference type="Proteomes" id="UP000000653">
    <property type="component" value="Chromosome"/>
</dbReference>
<dbReference type="GO" id="GO:0005737">
    <property type="term" value="C:cytoplasm"/>
    <property type="evidence" value="ECO:0007669"/>
    <property type="project" value="UniProtKB-SubCell"/>
</dbReference>
<dbReference type="GO" id="GO:0004325">
    <property type="term" value="F:ferrochelatase activity"/>
    <property type="evidence" value="ECO:0007669"/>
    <property type="project" value="UniProtKB-UniRule"/>
</dbReference>
<dbReference type="GO" id="GO:0046872">
    <property type="term" value="F:metal ion binding"/>
    <property type="evidence" value="ECO:0007669"/>
    <property type="project" value="UniProtKB-KW"/>
</dbReference>
<dbReference type="GO" id="GO:0006783">
    <property type="term" value="P:heme biosynthetic process"/>
    <property type="evidence" value="ECO:0007669"/>
    <property type="project" value="UniProtKB-UniRule"/>
</dbReference>
<dbReference type="CDD" id="cd00419">
    <property type="entry name" value="Ferrochelatase_C"/>
    <property type="match status" value="1"/>
</dbReference>
<dbReference type="CDD" id="cd03411">
    <property type="entry name" value="Ferrochelatase_N"/>
    <property type="match status" value="1"/>
</dbReference>
<dbReference type="FunFam" id="3.40.50.1400:FF:000012">
    <property type="entry name" value="Ferrochelatase"/>
    <property type="match status" value="1"/>
</dbReference>
<dbReference type="Gene3D" id="3.40.50.1400">
    <property type="match status" value="2"/>
</dbReference>
<dbReference type="HAMAP" id="MF_00323">
    <property type="entry name" value="Ferrochelatase"/>
    <property type="match status" value="1"/>
</dbReference>
<dbReference type="InterPro" id="IPR001015">
    <property type="entry name" value="Ferrochelatase"/>
</dbReference>
<dbReference type="InterPro" id="IPR033644">
    <property type="entry name" value="Ferrochelatase_C"/>
</dbReference>
<dbReference type="InterPro" id="IPR033659">
    <property type="entry name" value="Ferrochelatase_N"/>
</dbReference>
<dbReference type="NCBIfam" id="TIGR00109">
    <property type="entry name" value="hemH"/>
    <property type="match status" value="1"/>
</dbReference>
<dbReference type="PANTHER" id="PTHR11108">
    <property type="entry name" value="FERROCHELATASE"/>
    <property type="match status" value="1"/>
</dbReference>
<dbReference type="PANTHER" id="PTHR11108:SF1">
    <property type="entry name" value="FERROCHELATASE, MITOCHONDRIAL"/>
    <property type="match status" value="1"/>
</dbReference>
<dbReference type="Pfam" id="PF00762">
    <property type="entry name" value="Ferrochelatase"/>
    <property type="match status" value="1"/>
</dbReference>
<dbReference type="SUPFAM" id="SSF53800">
    <property type="entry name" value="Chelatase"/>
    <property type="match status" value="1"/>
</dbReference>
<proteinExistence type="inferred from homology"/>
<reference key="1">
    <citation type="journal article" date="2006" name="Genome Biol.">
        <title>Genomic analysis reveals that Pseudomonas aeruginosa virulence is combinatorial.</title>
        <authorList>
            <person name="Lee D.G."/>
            <person name="Urbach J.M."/>
            <person name="Wu G."/>
            <person name="Liberati N.T."/>
            <person name="Feinbaum R.L."/>
            <person name="Miyata S."/>
            <person name="Diggins L.T."/>
            <person name="He J."/>
            <person name="Saucier M."/>
            <person name="Deziel E."/>
            <person name="Friedman L."/>
            <person name="Li L."/>
            <person name="Grills G."/>
            <person name="Montgomery K."/>
            <person name="Kucherlapati R."/>
            <person name="Rahme L.G."/>
            <person name="Ausubel F.M."/>
        </authorList>
    </citation>
    <scope>NUCLEOTIDE SEQUENCE [LARGE SCALE GENOMIC DNA]</scope>
    <source>
        <strain>UCBPP-PA14</strain>
    </source>
</reference>
<protein>
    <recommendedName>
        <fullName evidence="1">Ferrochelatase</fullName>
        <ecNumber evidence="1">4.98.1.1</ecNumber>
    </recommendedName>
    <alternativeName>
        <fullName evidence="1">Heme synthase</fullName>
    </alternativeName>
    <alternativeName>
        <fullName evidence="1">Protoheme ferro-lyase</fullName>
    </alternativeName>
</protein>
<comment type="function">
    <text evidence="1">Catalyzes the ferrous insertion into protoporphyrin IX.</text>
</comment>
<comment type="catalytic activity">
    <reaction evidence="1">
        <text>heme b + 2 H(+) = protoporphyrin IX + Fe(2+)</text>
        <dbReference type="Rhea" id="RHEA:22584"/>
        <dbReference type="ChEBI" id="CHEBI:15378"/>
        <dbReference type="ChEBI" id="CHEBI:29033"/>
        <dbReference type="ChEBI" id="CHEBI:57306"/>
        <dbReference type="ChEBI" id="CHEBI:60344"/>
        <dbReference type="EC" id="4.98.1.1"/>
    </reaction>
</comment>
<comment type="pathway">
    <text evidence="1">Porphyrin-containing compound metabolism; protoheme biosynthesis; protoheme from protoporphyrin-IX: step 1/1.</text>
</comment>
<comment type="subcellular location">
    <subcellularLocation>
        <location evidence="1">Cytoplasm</location>
    </subcellularLocation>
</comment>
<comment type="similarity">
    <text evidence="1">Belongs to the ferrochelatase family.</text>
</comment>